<organism>
    <name type="scientific">Anaeromyxobacter sp. (strain Fw109-5)</name>
    <dbReference type="NCBI Taxonomy" id="404589"/>
    <lineage>
        <taxon>Bacteria</taxon>
        <taxon>Pseudomonadati</taxon>
        <taxon>Myxococcota</taxon>
        <taxon>Myxococcia</taxon>
        <taxon>Myxococcales</taxon>
        <taxon>Cystobacterineae</taxon>
        <taxon>Anaeromyxobacteraceae</taxon>
        <taxon>Anaeromyxobacter</taxon>
    </lineage>
</organism>
<proteinExistence type="inferred from homology"/>
<sequence>MCETARTLPPDIVPITVEEARTLIRHTGGPALDALLDRADAVRRAVHGDEVALCGITNAKSGRCPENCGFCSQSAHFPGADAPVYPLVPAEEMVAQAKVAERAGAREFSIVTSGTRVAKESELATIEEAVRKLRAETAVEPCASLGLVREPELVRLKAAGLMHYHHNLETARSFFENVCTTHTYDEQLETIRAAKRQGLKLCSGGILGMGETPEQRVELAATIRELGIDCVPMNFLNPRPGTPMEHVQAITAEECLAAVAVFRLMMPAAHIFVMGGREVNLGGRQHLIFRAGANGTMVGNYLTSAGRGPGETVRMVEEQGLRLRAPDTGREWAFDGSAPAEAEWNRRAAEPGGKRGLPVVGPPRGGCA</sequence>
<evidence type="ECO:0000255" key="1">
    <source>
        <dbReference type="HAMAP-Rule" id="MF_01694"/>
    </source>
</evidence>
<evidence type="ECO:0000255" key="2">
    <source>
        <dbReference type="PROSITE-ProRule" id="PRU01266"/>
    </source>
</evidence>
<evidence type="ECO:0000256" key="3">
    <source>
        <dbReference type="SAM" id="MobiDB-lite"/>
    </source>
</evidence>
<comment type="function">
    <text evidence="1">Catalyzes the conversion of dethiobiotin (DTB) to biotin by the insertion of a sulfur atom into dethiobiotin via a radical-based mechanism.</text>
</comment>
<comment type="catalytic activity">
    <reaction evidence="1">
        <text>(4R,5S)-dethiobiotin + (sulfur carrier)-SH + 2 reduced [2Fe-2S]-[ferredoxin] + 2 S-adenosyl-L-methionine = (sulfur carrier)-H + biotin + 2 5'-deoxyadenosine + 2 L-methionine + 2 oxidized [2Fe-2S]-[ferredoxin]</text>
        <dbReference type="Rhea" id="RHEA:22060"/>
        <dbReference type="Rhea" id="RHEA-COMP:10000"/>
        <dbReference type="Rhea" id="RHEA-COMP:10001"/>
        <dbReference type="Rhea" id="RHEA-COMP:14737"/>
        <dbReference type="Rhea" id="RHEA-COMP:14739"/>
        <dbReference type="ChEBI" id="CHEBI:17319"/>
        <dbReference type="ChEBI" id="CHEBI:29917"/>
        <dbReference type="ChEBI" id="CHEBI:33737"/>
        <dbReference type="ChEBI" id="CHEBI:33738"/>
        <dbReference type="ChEBI" id="CHEBI:57586"/>
        <dbReference type="ChEBI" id="CHEBI:57844"/>
        <dbReference type="ChEBI" id="CHEBI:59789"/>
        <dbReference type="ChEBI" id="CHEBI:64428"/>
        <dbReference type="ChEBI" id="CHEBI:149473"/>
        <dbReference type="EC" id="2.8.1.6"/>
    </reaction>
</comment>
<comment type="cofactor">
    <cofactor evidence="1">
        <name>[4Fe-4S] cluster</name>
        <dbReference type="ChEBI" id="CHEBI:49883"/>
    </cofactor>
    <text evidence="1">Binds 1 [4Fe-4S] cluster. The cluster is coordinated with 3 cysteines and an exchangeable S-adenosyl-L-methionine.</text>
</comment>
<comment type="cofactor">
    <cofactor evidence="1">
        <name>[2Fe-2S] cluster</name>
        <dbReference type="ChEBI" id="CHEBI:190135"/>
    </cofactor>
    <text evidence="1">Binds 1 [2Fe-2S] cluster. The cluster is coordinated with 3 cysteines and 1 arginine.</text>
</comment>
<comment type="pathway">
    <text evidence="1">Cofactor biosynthesis; biotin biosynthesis; biotin from 7,8-diaminononanoate: step 2/2.</text>
</comment>
<comment type="subunit">
    <text evidence="1">Homodimer.</text>
</comment>
<comment type="similarity">
    <text evidence="1">Belongs to the radical SAM superfamily. Biotin synthase family.</text>
</comment>
<protein>
    <recommendedName>
        <fullName evidence="1">Biotin synthase</fullName>
        <ecNumber evidence="1">2.8.1.6</ecNumber>
    </recommendedName>
</protein>
<name>BIOB_ANADF</name>
<accession>A7HG97</accession>
<feature type="chain" id="PRO_0000381197" description="Biotin synthase">
    <location>
        <begin position="1"/>
        <end position="368"/>
    </location>
</feature>
<feature type="domain" description="Radical SAM core" evidence="2">
    <location>
        <begin position="46"/>
        <end position="277"/>
    </location>
</feature>
<feature type="region of interest" description="Disordered" evidence="3">
    <location>
        <begin position="347"/>
        <end position="368"/>
    </location>
</feature>
<feature type="binding site" evidence="1">
    <location>
        <position position="64"/>
    </location>
    <ligand>
        <name>[4Fe-4S] cluster</name>
        <dbReference type="ChEBI" id="CHEBI:49883"/>
        <note>4Fe-4S-S-AdoMet</note>
    </ligand>
</feature>
<feature type="binding site" evidence="1">
    <location>
        <position position="68"/>
    </location>
    <ligand>
        <name>[4Fe-4S] cluster</name>
        <dbReference type="ChEBI" id="CHEBI:49883"/>
        <note>4Fe-4S-S-AdoMet</note>
    </ligand>
</feature>
<feature type="binding site" evidence="1">
    <location>
        <position position="71"/>
    </location>
    <ligand>
        <name>[4Fe-4S] cluster</name>
        <dbReference type="ChEBI" id="CHEBI:49883"/>
        <note>4Fe-4S-S-AdoMet</note>
    </ligand>
</feature>
<feature type="binding site" evidence="1">
    <location>
        <position position="109"/>
    </location>
    <ligand>
        <name>[2Fe-2S] cluster</name>
        <dbReference type="ChEBI" id="CHEBI:190135"/>
    </ligand>
</feature>
<feature type="binding site" evidence="1">
    <location>
        <position position="142"/>
    </location>
    <ligand>
        <name>[2Fe-2S] cluster</name>
        <dbReference type="ChEBI" id="CHEBI:190135"/>
    </ligand>
</feature>
<feature type="binding site" evidence="1">
    <location>
        <position position="202"/>
    </location>
    <ligand>
        <name>[2Fe-2S] cluster</name>
        <dbReference type="ChEBI" id="CHEBI:190135"/>
    </ligand>
</feature>
<keyword id="KW-0001">2Fe-2S</keyword>
<keyword id="KW-0004">4Fe-4S</keyword>
<keyword id="KW-0093">Biotin biosynthesis</keyword>
<keyword id="KW-0408">Iron</keyword>
<keyword id="KW-0411">Iron-sulfur</keyword>
<keyword id="KW-0479">Metal-binding</keyword>
<keyword id="KW-1185">Reference proteome</keyword>
<keyword id="KW-0949">S-adenosyl-L-methionine</keyword>
<keyword id="KW-0808">Transferase</keyword>
<dbReference type="EC" id="2.8.1.6" evidence="1"/>
<dbReference type="EMBL" id="CP000769">
    <property type="protein sequence ID" value="ABS27743.1"/>
    <property type="molecule type" value="Genomic_DNA"/>
</dbReference>
<dbReference type="RefSeq" id="WP_012098367.1">
    <property type="nucleotide sequence ID" value="NC_009675.1"/>
</dbReference>
<dbReference type="SMR" id="A7HG97"/>
<dbReference type="STRING" id="404589.Anae109_3562"/>
<dbReference type="KEGG" id="afw:Anae109_3562"/>
<dbReference type="eggNOG" id="COG0502">
    <property type="taxonomic scope" value="Bacteria"/>
</dbReference>
<dbReference type="HOGENOM" id="CLU_033172_2_1_7"/>
<dbReference type="OrthoDB" id="9786826at2"/>
<dbReference type="UniPathway" id="UPA00078">
    <property type="reaction ID" value="UER00162"/>
</dbReference>
<dbReference type="Proteomes" id="UP000006382">
    <property type="component" value="Chromosome"/>
</dbReference>
<dbReference type="GO" id="GO:0051537">
    <property type="term" value="F:2 iron, 2 sulfur cluster binding"/>
    <property type="evidence" value="ECO:0007669"/>
    <property type="project" value="UniProtKB-KW"/>
</dbReference>
<dbReference type="GO" id="GO:0051539">
    <property type="term" value="F:4 iron, 4 sulfur cluster binding"/>
    <property type="evidence" value="ECO:0007669"/>
    <property type="project" value="UniProtKB-KW"/>
</dbReference>
<dbReference type="GO" id="GO:0004076">
    <property type="term" value="F:biotin synthase activity"/>
    <property type="evidence" value="ECO:0007669"/>
    <property type="project" value="UniProtKB-UniRule"/>
</dbReference>
<dbReference type="GO" id="GO:0005506">
    <property type="term" value="F:iron ion binding"/>
    <property type="evidence" value="ECO:0007669"/>
    <property type="project" value="UniProtKB-UniRule"/>
</dbReference>
<dbReference type="GO" id="GO:0009102">
    <property type="term" value="P:biotin biosynthetic process"/>
    <property type="evidence" value="ECO:0007669"/>
    <property type="project" value="UniProtKB-UniRule"/>
</dbReference>
<dbReference type="CDD" id="cd01335">
    <property type="entry name" value="Radical_SAM"/>
    <property type="match status" value="1"/>
</dbReference>
<dbReference type="Gene3D" id="3.20.20.70">
    <property type="entry name" value="Aldolase class I"/>
    <property type="match status" value="1"/>
</dbReference>
<dbReference type="HAMAP" id="MF_01694">
    <property type="entry name" value="BioB"/>
    <property type="match status" value="1"/>
</dbReference>
<dbReference type="InterPro" id="IPR013785">
    <property type="entry name" value="Aldolase_TIM"/>
</dbReference>
<dbReference type="InterPro" id="IPR010722">
    <property type="entry name" value="BATS_dom"/>
</dbReference>
<dbReference type="InterPro" id="IPR002684">
    <property type="entry name" value="Biotin_synth/BioAB"/>
</dbReference>
<dbReference type="InterPro" id="IPR024177">
    <property type="entry name" value="Biotin_synthase"/>
</dbReference>
<dbReference type="InterPro" id="IPR006638">
    <property type="entry name" value="Elp3/MiaA/NifB-like_rSAM"/>
</dbReference>
<dbReference type="InterPro" id="IPR007197">
    <property type="entry name" value="rSAM"/>
</dbReference>
<dbReference type="NCBIfam" id="TIGR00433">
    <property type="entry name" value="bioB"/>
    <property type="match status" value="1"/>
</dbReference>
<dbReference type="PANTHER" id="PTHR22976">
    <property type="entry name" value="BIOTIN SYNTHASE"/>
    <property type="match status" value="1"/>
</dbReference>
<dbReference type="PANTHER" id="PTHR22976:SF2">
    <property type="entry name" value="BIOTIN SYNTHASE, MITOCHONDRIAL"/>
    <property type="match status" value="1"/>
</dbReference>
<dbReference type="Pfam" id="PF06968">
    <property type="entry name" value="BATS"/>
    <property type="match status" value="1"/>
</dbReference>
<dbReference type="Pfam" id="PF04055">
    <property type="entry name" value="Radical_SAM"/>
    <property type="match status" value="1"/>
</dbReference>
<dbReference type="PIRSF" id="PIRSF001619">
    <property type="entry name" value="Biotin_synth"/>
    <property type="match status" value="1"/>
</dbReference>
<dbReference type="SFLD" id="SFLDG01060">
    <property type="entry name" value="BATS_domain_containing"/>
    <property type="match status" value="1"/>
</dbReference>
<dbReference type="SFLD" id="SFLDG01278">
    <property type="entry name" value="biotin_synthase_like"/>
    <property type="match status" value="1"/>
</dbReference>
<dbReference type="SMART" id="SM00876">
    <property type="entry name" value="BATS"/>
    <property type="match status" value="1"/>
</dbReference>
<dbReference type="SMART" id="SM00729">
    <property type="entry name" value="Elp3"/>
    <property type="match status" value="1"/>
</dbReference>
<dbReference type="SUPFAM" id="SSF102114">
    <property type="entry name" value="Radical SAM enzymes"/>
    <property type="match status" value="1"/>
</dbReference>
<dbReference type="PROSITE" id="PS51918">
    <property type="entry name" value="RADICAL_SAM"/>
    <property type="match status" value="1"/>
</dbReference>
<reference key="1">
    <citation type="journal article" date="2015" name="Genome Announc.">
        <title>Complete genome sequence of Anaeromyxobacter sp. Fw109-5, an anaerobic, metal-reducing bacterium isolated from a contaminated subsurface environment.</title>
        <authorList>
            <person name="Hwang C."/>
            <person name="Copeland A."/>
            <person name="Lucas S."/>
            <person name="Lapidus A."/>
            <person name="Barry K."/>
            <person name="Glavina Del Rio T."/>
            <person name="Dalin E."/>
            <person name="Tice H."/>
            <person name="Pitluck S."/>
            <person name="Sims D."/>
            <person name="Brettin T."/>
            <person name="Bruce D.C."/>
            <person name="Detter J.C."/>
            <person name="Han C.S."/>
            <person name="Schmutz J."/>
            <person name="Larimer F.W."/>
            <person name="Land M.L."/>
            <person name="Hauser L.J."/>
            <person name="Kyrpides N."/>
            <person name="Lykidis A."/>
            <person name="Richardson P."/>
            <person name="Belieav A."/>
            <person name="Sanford R.A."/>
            <person name="Loeffler F.E."/>
            <person name="Fields M.W."/>
        </authorList>
    </citation>
    <scope>NUCLEOTIDE SEQUENCE [LARGE SCALE GENOMIC DNA]</scope>
    <source>
        <strain>Fw109-5</strain>
    </source>
</reference>
<gene>
    <name evidence="1" type="primary">bioB</name>
    <name type="ordered locus">Anae109_3562</name>
</gene>